<gene>
    <name evidence="1" type="primary">infC</name>
    <name type="ordered locus">Erum8900</name>
    <name type="ordered locus">ERWE_CDS_09420</name>
</gene>
<comment type="function">
    <text evidence="1">IF-3 binds to the 30S ribosomal subunit and shifts the equilibrium between 70S ribosomes and their 50S and 30S subunits in favor of the free subunits, thus enhancing the availability of 30S subunits on which protein synthesis initiation begins.</text>
</comment>
<comment type="subunit">
    <text evidence="1">Monomer.</text>
</comment>
<comment type="subcellular location">
    <subcellularLocation>
        <location evidence="1">Cytoplasm</location>
    </subcellularLocation>
</comment>
<comment type="similarity">
    <text evidence="1">Belongs to the IF-3 family.</text>
</comment>
<reference key="1">
    <citation type="journal article" date="2005" name="Proc. Natl. Acad. Sci. U.S.A.">
        <title>The genome of the heartwater agent Ehrlichia ruminantium contains multiple tandem repeats of actively variable copy number.</title>
        <authorList>
            <person name="Collins N.E."/>
            <person name="Liebenberg J."/>
            <person name="de Villiers E.P."/>
            <person name="Brayton K.A."/>
            <person name="Louw E."/>
            <person name="Pretorius A."/>
            <person name="Faber F.E."/>
            <person name="van Heerden H."/>
            <person name="Josemans A."/>
            <person name="van Kleef M."/>
            <person name="Steyn H.C."/>
            <person name="van Strijp M.F."/>
            <person name="Zweygarth E."/>
            <person name="Jongejan F."/>
            <person name="Maillard J.C."/>
            <person name="Berthier D."/>
            <person name="Botha M."/>
            <person name="Joubert F."/>
            <person name="Corton C.H."/>
            <person name="Thomson N.R."/>
            <person name="Allsopp M.T."/>
            <person name="Allsopp B.A."/>
        </authorList>
    </citation>
    <scope>NUCLEOTIDE SEQUENCE [LARGE SCALE GENOMIC DNA]</scope>
    <source>
        <strain>Welgevonden</strain>
    </source>
</reference>
<reference key="2">
    <citation type="journal article" date="2006" name="J. Bacteriol.">
        <title>Comparative genomic analysis of three strains of Ehrlichia ruminantium reveals an active process of genome size plasticity.</title>
        <authorList>
            <person name="Frutos R."/>
            <person name="Viari A."/>
            <person name="Ferraz C."/>
            <person name="Morgat A."/>
            <person name="Eychenie S."/>
            <person name="Kandassamy Y."/>
            <person name="Chantal I."/>
            <person name="Bensaid A."/>
            <person name="Coissac E."/>
            <person name="Vachiery N."/>
            <person name="Demaille J."/>
            <person name="Martinez D."/>
        </authorList>
    </citation>
    <scope>NUCLEOTIDE SEQUENCE [LARGE SCALE GENOMIC DNA]</scope>
    <source>
        <strain>Welgevonden</strain>
    </source>
</reference>
<sequence>MKSNKFSNKNKINEMITAKKVKLVDQDSVMVGVVDIEEALSRARSVNLDLVEIVHDDEYPLCKIFDYSKYRYSHKKKISDSKKKQKTIIVKELKFKLNIGDNDYNVKLNMIRGFIERGDKVKISLKFIGREILHPEVGMEIIERLIKDTSDIAKPENLPKREGNLINMILTTK</sequence>
<dbReference type="EMBL" id="CR767821">
    <property type="protein sequence ID" value="CAH58625.1"/>
    <property type="molecule type" value="Genomic_DNA"/>
</dbReference>
<dbReference type="EMBL" id="CR925678">
    <property type="protein sequence ID" value="CAI27436.1"/>
    <property type="molecule type" value="Genomic_DNA"/>
</dbReference>
<dbReference type="RefSeq" id="WP_011155568.1">
    <property type="nucleotide sequence ID" value="NC_005295.2"/>
</dbReference>
<dbReference type="SMR" id="Q5H9Z3"/>
<dbReference type="GeneID" id="33057856"/>
<dbReference type="KEGG" id="eru:Erum8900"/>
<dbReference type="KEGG" id="erw:ERWE_CDS_09420"/>
<dbReference type="eggNOG" id="COG0290">
    <property type="taxonomic scope" value="Bacteria"/>
</dbReference>
<dbReference type="HOGENOM" id="CLU_054919_3_2_5"/>
<dbReference type="Proteomes" id="UP000001021">
    <property type="component" value="Chromosome"/>
</dbReference>
<dbReference type="GO" id="GO:0005829">
    <property type="term" value="C:cytosol"/>
    <property type="evidence" value="ECO:0007669"/>
    <property type="project" value="TreeGrafter"/>
</dbReference>
<dbReference type="GO" id="GO:0016020">
    <property type="term" value="C:membrane"/>
    <property type="evidence" value="ECO:0007669"/>
    <property type="project" value="TreeGrafter"/>
</dbReference>
<dbReference type="GO" id="GO:0043022">
    <property type="term" value="F:ribosome binding"/>
    <property type="evidence" value="ECO:0007669"/>
    <property type="project" value="TreeGrafter"/>
</dbReference>
<dbReference type="GO" id="GO:0003743">
    <property type="term" value="F:translation initiation factor activity"/>
    <property type="evidence" value="ECO:0007669"/>
    <property type="project" value="UniProtKB-UniRule"/>
</dbReference>
<dbReference type="GO" id="GO:0032790">
    <property type="term" value="P:ribosome disassembly"/>
    <property type="evidence" value="ECO:0007669"/>
    <property type="project" value="TreeGrafter"/>
</dbReference>
<dbReference type="FunFam" id="3.30.110.10:FF:000001">
    <property type="entry name" value="Translation initiation factor IF-3"/>
    <property type="match status" value="1"/>
</dbReference>
<dbReference type="Gene3D" id="3.30.110.10">
    <property type="entry name" value="Translation initiation factor 3 (IF-3), C-terminal domain"/>
    <property type="match status" value="1"/>
</dbReference>
<dbReference type="Gene3D" id="3.10.20.80">
    <property type="entry name" value="Translation initiation factor 3 (IF-3), N-terminal domain"/>
    <property type="match status" value="1"/>
</dbReference>
<dbReference type="HAMAP" id="MF_00080">
    <property type="entry name" value="IF_3"/>
    <property type="match status" value="1"/>
</dbReference>
<dbReference type="InterPro" id="IPR036788">
    <property type="entry name" value="T_IF-3_C_sf"/>
</dbReference>
<dbReference type="InterPro" id="IPR036787">
    <property type="entry name" value="T_IF-3_N_sf"/>
</dbReference>
<dbReference type="InterPro" id="IPR001288">
    <property type="entry name" value="Translation_initiation_fac_3"/>
</dbReference>
<dbReference type="InterPro" id="IPR019815">
    <property type="entry name" value="Translation_initiation_fac_3_C"/>
</dbReference>
<dbReference type="InterPro" id="IPR019814">
    <property type="entry name" value="Translation_initiation_fac_3_N"/>
</dbReference>
<dbReference type="NCBIfam" id="TIGR00168">
    <property type="entry name" value="infC"/>
    <property type="match status" value="1"/>
</dbReference>
<dbReference type="PANTHER" id="PTHR10938">
    <property type="entry name" value="TRANSLATION INITIATION FACTOR IF-3"/>
    <property type="match status" value="1"/>
</dbReference>
<dbReference type="PANTHER" id="PTHR10938:SF0">
    <property type="entry name" value="TRANSLATION INITIATION FACTOR IF-3, MITOCHONDRIAL"/>
    <property type="match status" value="1"/>
</dbReference>
<dbReference type="Pfam" id="PF00707">
    <property type="entry name" value="IF3_C"/>
    <property type="match status" value="1"/>
</dbReference>
<dbReference type="Pfam" id="PF05198">
    <property type="entry name" value="IF3_N"/>
    <property type="match status" value="1"/>
</dbReference>
<dbReference type="SUPFAM" id="SSF55200">
    <property type="entry name" value="Translation initiation factor IF3, C-terminal domain"/>
    <property type="match status" value="1"/>
</dbReference>
<dbReference type="SUPFAM" id="SSF54364">
    <property type="entry name" value="Translation initiation factor IF3, N-terminal domain"/>
    <property type="match status" value="1"/>
</dbReference>
<feature type="chain" id="PRO_1000057530" description="Translation initiation factor IF-3">
    <location>
        <begin position="1"/>
        <end position="173"/>
    </location>
</feature>
<organism>
    <name type="scientific">Ehrlichia ruminantium (strain Welgevonden)</name>
    <dbReference type="NCBI Taxonomy" id="254945"/>
    <lineage>
        <taxon>Bacteria</taxon>
        <taxon>Pseudomonadati</taxon>
        <taxon>Pseudomonadota</taxon>
        <taxon>Alphaproteobacteria</taxon>
        <taxon>Rickettsiales</taxon>
        <taxon>Anaplasmataceae</taxon>
        <taxon>Ehrlichia</taxon>
    </lineage>
</organism>
<name>IF3_EHRRW</name>
<protein>
    <recommendedName>
        <fullName evidence="1">Translation initiation factor IF-3</fullName>
    </recommendedName>
</protein>
<proteinExistence type="inferred from homology"/>
<evidence type="ECO:0000255" key="1">
    <source>
        <dbReference type="HAMAP-Rule" id="MF_00080"/>
    </source>
</evidence>
<accession>Q5H9Z3</accession>
<accession>Q5FCC0</accession>
<keyword id="KW-0963">Cytoplasm</keyword>
<keyword id="KW-0396">Initiation factor</keyword>
<keyword id="KW-0648">Protein biosynthesis</keyword>